<sequence length="120" mass="13281">MISKIDKNKVRLKRHARVRNKLAGTAEKPRLNIYRSNKHIYAQVIDDVSGKTLAQASTQEKDLANESGSKVELSAKVGETVAKRASEKGVKTIVFDRGGYLYHGRVKALADAARENGLEF</sequence>
<accession>Q49ZF2</accession>
<comment type="function">
    <text evidence="1">This is one of the proteins that bind and probably mediate the attachment of the 5S RNA into the large ribosomal subunit, where it forms part of the central protuberance.</text>
</comment>
<comment type="subunit">
    <text evidence="1">Part of the 50S ribosomal subunit; part of the 5S rRNA/L5/L18/L25 subcomplex. Contacts the 5S and 23S rRNAs.</text>
</comment>
<comment type="similarity">
    <text evidence="1">Belongs to the universal ribosomal protein uL18 family.</text>
</comment>
<keyword id="KW-1185">Reference proteome</keyword>
<keyword id="KW-0687">Ribonucleoprotein</keyword>
<keyword id="KW-0689">Ribosomal protein</keyword>
<keyword id="KW-0694">RNA-binding</keyword>
<keyword id="KW-0699">rRNA-binding</keyword>
<feature type="chain" id="PRO_0000131351" description="Large ribosomal subunit protein uL18">
    <location>
        <begin position="1"/>
        <end position="120"/>
    </location>
</feature>
<name>RL18_STAS1</name>
<gene>
    <name evidence="1" type="primary">rplR</name>
    <name type="ordered locus">SSP0679</name>
</gene>
<organism>
    <name type="scientific">Staphylococcus saprophyticus subsp. saprophyticus (strain ATCC 15305 / DSM 20229 / NCIMB 8711 / NCTC 7292 / S-41)</name>
    <dbReference type="NCBI Taxonomy" id="342451"/>
    <lineage>
        <taxon>Bacteria</taxon>
        <taxon>Bacillati</taxon>
        <taxon>Bacillota</taxon>
        <taxon>Bacilli</taxon>
        <taxon>Bacillales</taxon>
        <taxon>Staphylococcaceae</taxon>
        <taxon>Staphylococcus</taxon>
    </lineage>
</organism>
<proteinExistence type="inferred from homology"/>
<reference key="1">
    <citation type="journal article" date="2005" name="Proc. Natl. Acad. Sci. U.S.A.">
        <title>Whole genome sequence of Staphylococcus saprophyticus reveals the pathogenesis of uncomplicated urinary tract infection.</title>
        <authorList>
            <person name="Kuroda M."/>
            <person name="Yamashita A."/>
            <person name="Hirakawa H."/>
            <person name="Kumano M."/>
            <person name="Morikawa K."/>
            <person name="Higashide M."/>
            <person name="Maruyama A."/>
            <person name="Inose Y."/>
            <person name="Matoba K."/>
            <person name="Toh H."/>
            <person name="Kuhara S."/>
            <person name="Hattori M."/>
            <person name="Ohta T."/>
        </authorList>
    </citation>
    <scope>NUCLEOTIDE SEQUENCE [LARGE SCALE GENOMIC DNA]</scope>
    <source>
        <strain>ATCC 15305 / DSM 20229 / NCIMB 8711 / NCTC 7292 / S-41</strain>
    </source>
</reference>
<evidence type="ECO:0000255" key="1">
    <source>
        <dbReference type="HAMAP-Rule" id="MF_01337"/>
    </source>
</evidence>
<evidence type="ECO:0000305" key="2"/>
<dbReference type="EMBL" id="AP008934">
    <property type="protein sequence ID" value="BAE17824.1"/>
    <property type="molecule type" value="Genomic_DNA"/>
</dbReference>
<dbReference type="RefSeq" id="WP_011302601.1">
    <property type="nucleotide sequence ID" value="NZ_MTGA01000036.1"/>
</dbReference>
<dbReference type="SMR" id="Q49ZF2"/>
<dbReference type="GeneID" id="3615978"/>
<dbReference type="KEGG" id="ssp:SSP0679"/>
<dbReference type="PATRIC" id="fig|342451.11.peg.681"/>
<dbReference type="eggNOG" id="COG0256">
    <property type="taxonomic scope" value="Bacteria"/>
</dbReference>
<dbReference type="HOGENOM" id="CLU_098841_0_1_9"/>
<dbReference type="OrthoDB" id="9810939at2"/>
<dbReference type="Proteomes" id="UP000006371">
    <property type="component" value="Chromosome"/>
</dbReference>
<dbReference type="GO" id="GO:0022625">
    <property type="term" value="C:cytosolic large ribosomal subunit"/>
    <property type="evidence" value="ECO:0007669"/>
    <property type="project" value="TreeGrafter"/>
</dbReference>
<dbReference type="GO" id="GO:0008097">
    <property type="term" value="F:5S rRNA binding"/>
    <property type="evidence" value="ECO:0007669"/>
    <property type="project" value="TreeGrafter"/>
</dbReference>
<dbReference type="GO" id="GO:0003735">
    <property type="term" value="F:structural constituent of ribosome"/>
    <property type="evidence" value="ECO:0007669"/>
    <property type="project" value="InterPro"/>
</dbReference>
<dbReference type="GO" id="GO:0006412">
    <property type="term" value="P:translation"/>
    <property type="evidence" value="ECO:0007669"/>
    <property type="project" value="UniProtKB-UniRule"/>
</dbReference>
<dbReference type="CDD" id="cd00432">
    <property type="entry name" value="Ribosomal_L18_L5e"/>
    <property type="match status" value="1"/>
</dbReference>
<dbReference type="FunFam" id="3.30.420.100:FF:000001">
    <property type="entry name" value="50S ribosomal protein L18"/>
    <property type="match status" value="1"/>
</dbReference>
<dbReference type="Gene3D" id="3.30.420.100">
    <property type="match status" value="1"/>
</dbReference>
<dbReference type="HAMAP" id="MF_01337_B">
    <property type="entry name" value="Ribosomal_uL18_B"/>
    <property type="match status" value="1"/>
</dbReference>
<dbReference type="InterPro" id="IPR004389">
    <property type="entry name" value="Ribosomal_uL18_bac-type"/>
</dbReference>
<dbReference type="InterPro" id="IPR005484">
    <property type="entry name" value="Ribosomal_uL18_bac/euk"/>
</dbReference>
<dbReference type="NCBIfam" id="TIGR00060">
    <property type="entry name" value="L18_bact"/>
    <property type="match status" value="1"/>
</dbReference>
<dbReference type="PANTHER" id="PTHR12899">
    <property type="entry name" value="39S RIBOSOMAL PROTEIN L18, MITOCHONDRIAL"/>
    <property type="match status" value="1"/>
</dbReference>
<dbReference type="PANTHER" id="PTHR12899:SF3">
    <property type="entry name" value="LARGE RIBOSOMAL SUBUNIT PROTEIN UL18M"/>
    <property type="match status" value="1"/>
</dbReference>
<dbReference type="Pfam" id="PF00861">
    <property type="entry name" value="Ribosomal_L18p"/>
    <property type="match status" value="1"/>
</dbReference>
<dbReference type="SUPFAM" id="SSF53137">
    <property type="entry name" value="Translational machinery components"/>
    <property type="match status" value="1"/>
</dbReference>
<protein>
    <recommendedName>
        <fullName evidence="1">Large ribosomal subunit protein uL18</fullName>
    </recommendedName>
    <alternativeName>
        <fullName evidence="2">50S ribosomal protein L18</fullName>
    </alternativeName>
</protein>